<accession>P37213</accession>
<accession>A0A175JK66</accession>
<accession>A0A8U0WP38</accession>
<accession>C4LZ29</accession>
<accession>Q24801</accession>
<proteinExistence type="evidence at protein level"/>
<reference evidence="12" key="1">
    <citation type="journal article" date="1993" name="Mol. Biochem. Parasitol.">
        <title>Primary structure of the pyruvate phosphate dikinase in Entamoeba histolytica.</title>
        <authorList>
            <person name="Bruchhaus I."/>
            <person name="Tannich E."/>
        </authorList>
    </citation>
    <scope>NUCLEOTIDE SEQUENCE [GENOMIC DNA]</scope>
    <source>
        <strain evidence="12">ATCC 30459 / HM-1:IMSS / ABRM</strain>
    </source>
</reference>
<reference evidence="10" key="2">
    <citation type="journal article" date="1994" name="Gene">
        <title>Cloning and sequence determination of the gene coding for the pyruvate phosphate dikinase of Entamoeba histolytica.</title>
        <authorList>
            <person name="Saavedra-Lira E."/>
            <person name="Perez-Montfort R."/>
        </authorList>
    </citation>
    <scope>NUCLEOTIDE SEQUENCE</scope>
    <source>
        <strain evidence="10">ATCC 30459 / HM-1:IMSS / ABRM</strain>
    </source>
</reference>
<reference evidence="13" key="3">
    <citation type="journal article" date="2005" name="Nature">
        <title>The genome of the protist parasite Entamoeba histolytica.</title>
        <authorList>
            <person name="Loftus B.J."/>
            <person name="Anderson I."/>
            <person name="Davies R."/>
            <person name="Alsmark U.C."/>
            <person name="Samuelson J."/>
            <person name="Amedeo P."/>
            <person name="Roncaglia P."/>
            <person name="Berriman M."/>
            <person name="Hirt R.P."/>
            <person name="Mann B.J."/>
            <person name="Nozaki T."/>
            <person name="Suh B."/>
            <person name="Pop M."/>
            <person name="Duchene M."/>
            <person name="Ackers J."/>
            <person name="Tannich E."/>
            <person name="Leippe M."/>
            <person name="Hofer M."/>
            <person name="Bruchhaus I."/>
            <person name="Willhoeft U."/>
            <person name="Bhattacharya A."/>
            <person name="Chillingworth T."/>
            <person name="Churcher C.M."/>
            <person name="Hance Z."/>
            <person name="Harris B."/>
            <person name="Harris D."/>
            <person name="Jagels K."/>
            <person name="Moule S."/>
            <person name="Mungall K.L."/>
            <person name="Ormond D."/>
            <person name="Squares R."/>
            <person name="Whitehead S."/>
            <person name="Quail M.A."/>
            <person name="Rabbinowitsch E."/>
            <person name="Norbertczak H."/>
            <person name="Price C."/>
            <person name="Wang Z."/>
            <person name="Guillen N."/>
            <person name="Gilchrist C."/>
            <person name="Stroup S.E."/>
            <person name="Bhattacharya S."/>
            <person name="Lohia A."/>
            <person name="Foster P.G."/>
            <person name="Sicheritz-Ponten T."/>
            <person name="Weber C."/>
            <person name="Singh U."/>
            <person name="Mukherjee C."/>
            <person name="El-Sayed N.M.A."/>
            <person name="Petri W.A."/>
            <person name="Clark C.G."/>
            <person name="Embley T.M."/>
            <person name="Barrell B.G."/>
            <person name="Fraser C.M."/>
            <person name="Hall N."/>
        </authorList>
    </citation>
    <scope>NUCLEOTIDE SEQUENCE [LARGE SCALE GENOMIC DNA]</scope>
    <source>
        <strain evidence="13">ATCC 30459 / HM-1:IMSS / ABRM</strain>
    </source>
</reference>
<reference evidence="11" key="4">
    <citation type="journal article" date="1992" name="Arch. Med. Res.">
        <title>Partial nucleotide sequence of the enzyme pyruvate, orthophosphate dikinase of Entamoeba histolytica HM1:IMSS.</title>
        <authorList>
            <person name="Saavedra-Lira E."/>
            <person name="Robinson O."/>
            <person name="Perez-Montfort R."/>
        </authorList>
    </citation>
    <scope>NUCLEOTIDE SEQUENCE OF 442-626</scope>
    <source>
        <strain evidence="11">ATCC 30459 / HM-1:IMSS / ABRM</strain>
    </source>
</reference>
<reference key="5">
    <citation type="journal article" date="2004" name="J. Biol. Chem.">
        <title>Kinetic mechanism and metabolic role of pyruvate phosphate dikinase from Entamoeba histolytica.</title>
        <authorList>
            <person name="Varela-Gomez M."/>
            <person name="Moreno-Sanchez R."/>
            <person name="Pardo J.P."/>
            <person name="Perez-Montfort R."/>
        </authorList>
    </citation>
    <scope>FUNCTION</scope>
    <scope>CATALYTIC ACTIVITY</scope>
    <scope>COFACTOR</scope>
    <scope>BIOPHYSICOCHEMICAL PROPERTIES</scope>
</reference>
<comment type="function">
    <text evidence="4">Catalyzes the dephosphorylation of phosphoenolpyruvate and diphosphate to produce ATP.</text>
</comment>
<comment type="catalytic activity">
    <reaction evidence="4">
        <text>pyruvate + phosphate + ATP = phosphoenolpyruvate + AMP + diphosphate + H(+)</text>
        <dbReference type="Rhea" id="RHEA:10756"/>
        <dbReference type="ChEBI" id="CHEBI:15361"/>
        <dbReference type="ChEBI" id="CHEBI:15378"/>
        <dbReference type="ChEBI" id="CHEBI:30616"/>
        <dbReference type="ChEBI" id="CHEBI:33019"/>
        <dbReference type="ChEBI" id="CHEBI:43474"/>
        <dbReference type="ChEBI" id="CHEBI:58702"/>
        <dbReference type="ChEBI" id="CHEBI:456215"/>
        <dbReference type="EC" id="2.7.9.1"/>
    </reaction>
    <physiologicalReaction direction="right-to-left" evidence="4">
        <dbReference type="Rhea" id="RHEA:10758"/>
    </physiologicalReaction>
</comment>
<comment type="cofactor">
    <cofactor evidence="9">
        <name>Mg(2+)</name>
        <dbReference type="ChEBI" id="CHEBI:18420"/>
    </cofactor>
</comment>
<comment type="biophysicochemical properties">
    <kinetics>
        <KM evidence="4">24 uM for phosphoenolpyruvate (at 25 degrees Celsius, pH 6.3 and fixed diphosphate concentration)</KM>
        <KM evidence="4">32 uM for phosphoenolpyruvate (at 25 degrees Celsius, pH 6.3 and fixed AMP concentration)</KM>
        <KM evidence="4">4 uM for AMP (at 25 degrees Celsius, pH 6.3 and fixed diphosphate concentration)</KM>
        <KM evidence="4">23 uM for AMP (at 25 degrees Celsius, pH 6.3 and fixed phosphoenolpyruvate concentration)</KM>
        <KM evidence="4">62 uM for diphosphate (at 25 degrees Celsius, pH 6.3 and fixed AMP concentration)</KM>
        <KM evidence="4">126 uM for diphosphate (at 25 degrees Celsius, pH 6.3 and fixed phosphoenolpyruvate concentration)</KM>
    </kinetics>
</comment>
<comment type="subunit">
    <text evidence="2">Homodimer.</text>
</comment>
<comment type="domain">
    <text evidence="2">The N-terminal domain contains the ATP/Pi active site, the central domain the pyrophosphate/phosphate carrier histidine, and the C-terminal domain the pyruvate active site.</text>
</comment>
<comment type="miscellaneous">
    <text evidence="2">The reaction takes place in three steps, each mediated by a carrier histidine residue located on the surface of the central domain. The two first partial reactions are catalyzed at an active site located on the N-terminal domain, and the third partial reaction is catalyzed at an active site located on the C-terminal domain. For catalytic turnover, the central domain swivels from the concave surface of the N-terminal domain to that of the C-terminal domain.</text>
</comment>
<comment type="similarity">
    <text evidence="8">Belongs to the PEP-utilizing enzyme family.</text>
</comment>
<feature type="chain" id="PRO_0000147051" description="Pyruvate, phosphate dikinase">
    <location>
        <begin position="1"/>
        <end position="885"/>
    </location>
</feature>
<feature type="region of interest" description="N-terminal">
    <location>
        <begin position="1"/>
        <end position="342"/>
    </location>
</feature>
<feature type="region of interest" description="Linker 1">
    <location>
        <begin position="343"/>
        <end position="399"/>
    </location>
</feature>
<feature type="region of interest" description="Central">
    <location>
        <begin position="400"/>
        <end position="497"/>
    </location>
</feature>
<feature type="region of interest" description="Linker 2">
    <location>
        <begin position="498"/>
        <end position="533"/>
    </location>
</feature>
<feature type="region of interest" description="C-terminal">
    <location>
        <begin position="534"/>
        <end position="885"/>
    </location>
</feature>
<feature type="active site" description="Tele-phosphohistidine intermediate" evidence="1">
    <location>
        <position position="454"/>
    </location>
</feature>
<feature type="active site" description="Proton donor" evidence="1">
    <location>
        <position position="839"/>
    </location>
</feature>
<feature type="binding site" evidence="3">
    <location>
        <position position="91"/>
    </location>
    <ligand>
        <name>ATP</name>
        <dbReference type="ChEBI" id="CHEBI:30616"/>
    </ligand>
</feature>
<feature type="binding site" evidence="1">
    <location>
        <position position="561"/>
    </location>
    <ligand>
        <name>substrate</name>
    </ligand>
</feature>
<feature type="binding site" evidence="1">
    <location>
        <position position="617"/>
    </location>
    <ligand>
        <name>substrate</name>
    </ligand>
</feature>
<feature type="binding site" evidence="1">
    <location>
        <position position="752"/>
    </location>
    <ligand>
        <name>Mg(2+)</name>
        <dbReference type="ChEBI" id="CHEBI:18420"/>
    </ligand>
</feature>
<feature type="binding site" evidence="1">
    <location>
        <position position="752"/>
    </location>
    <ligand>
        <name>substrate</name>
    </ligand>
</feature>
<feature type="binding site" evidence="1">
    <location>
        <position position="773"/>
    </location>
    <ligand>
        <name>substrate</name>
    </ligand>
</feature>
<feature type="binding site" evidence="1">
    <location>
        <position position="774"/>
    </location>
    <ligand>
        <name>substrate</name>
    </ligand>
</feature>
<feature type="binding site" evidence="1">
    <location>
        <position position="775"/>
    </location>
    <ligand>
        <name>substrate</name>
    </ligand>
</feature>
<feature type="binding site" evidence="1">
    <location>
        <position position="776"/>
    </location>
    <ligand>
        <name>Mg(2+)</name>
        <dbReference type="ChEBI" id="CHEBI:18420"/>
    </ligand>
</feature>
<feature type="binding site" evidence="1">
    <location>
        <position position="776"/>
    </location>
    <ligand>
        <name>substrate</name>
    </ligand>
</feature>
<feature type="sequence conflict" description="In Ref. 1; CAA52673." evidence="8" ref="1">
    <original>NM</original>
    <variation>EY</variation>
    <location>
        <begin position="67"/>
        <end position="68"/>
    </location>
</feature>
<feature type="sequence conflict" description="In Ref. 1; CAA52673." evidence="8" ref="1">
    <original>VD</original>
    <variation>AC</variation>
    <location>
        <begin position="146"/>
        <end position="147"/>
    </location>
</feature>
<feature type="sequence conflict" description="In Ref. 1; CAA52673." evidence="8" ref="1">
    <original>A</original>
    <variation>R</variation>
    <location>
        <position position="298"/>
    </location>
</feature>
<feature type="sequence conflict" description="In Ref. 1; CAA52673." evidence="8" ref="1">
    <original>NA</original>
    <variation>AG</variation>
    <location>
        <begin position="539"/>
        <end position="540"/>
    </location>
</feature>
<feature type="sequence conflict" description="In Ref. 1; CAA52673." evidence="8" ref="1">
    <original>A</original>
    <variation>R</variation>
    <location>
        <position position="696"/>
    </location>
</feature>
<feature type="sequence conflict" description="In Ref. 1; CAA52673." evidence="8" ref="1">
    <original>KTHA</original>
    <variation>NDHR</variation>
    <location>
        <begin position="704"/>
        <end position="707"/>
    </location>
</feature>
<feature type="sequence conflict" description="In Ref. 1; CAA52673." evidence="8" ref="1">
    <original>M</original>
    <variation>S</variation>
    <location>
        <position position="746"/>
    </location>
</feature>
<evidence type="ECO:0000250" key="1">
    <source>
        <dbReference type="UniProtKB" id="P11155"/>
    </source>
</evidence>
<evidence type="ECO:0000250" key="2">
    <source>
        <dbReference type="UniProtKB" id="P22983"/>
    </source>
</evidence>
<evidence type="ECO:0000255" key="3"/>
<evidence type="ECO:0000269" key="4">
    <source>
    </source>
</evidence>
<evidence type="ECO:0000303" key="5">
    <source>
    </source>
</evidence>
<evidence type="ECO:0000303" key="6">
    <source>
    </source>
</evidence>
<evidence type="ECO:0000303" key="7">
    <source>
    </source>
</evidence>
<evidence type="ECO:0000305" key="8"/>
<evidence type="ECO:0000305" key="9">
    <source>
    </source>
</evidence>
<evidence type="ECO:0000312" key="10">
    <source>
        <dbReference type="EMBL" id="AAA18944.1"/>
    </source>
</evidence>
<evidence type="ECO:0000312" key="11">
    <source>
        <dbReference type="EMBL" id="AAA19026.1"/>
    </source>
</evidence>
<evidence type="ECO:0000312" key="12">
    <source>
        <dbReference type="EMBL" id="CAA52673.1"/>
    </source>
</evidence>
<evidence type="ECO:0000312" key="13">
    <source>
        <dbReference type="EMBL" id="EAL51884.1"/>
    </source>
</evidence>
<organism evidence="13">
    <name type="scientific">Entamoeba histolytica (strain ATCC 30459 / HM-1:IMSS / ABRM)</name>
    <dbReference type="NCBI Taxonomy" id="294381"/>
    <lineage>
        <taxon>Eukaryota</taxon>
        <taxon>Amoebozoa</taxon>
        <taxon>Evosea</taxon>
        <taxon>Archamoebae</taxon>
        <taxon>Mastigamoebida</taxon>
        <taxon>Entamoebidae</taxon>
        <taxon>Entamoeba</taxon>
    </lineage>
</organism>
<sequence length="885" mass="97899">MQRVYAFEDGDGTNKKLLGGKGAGLCTMTKIGLPVPQGFVITTEMCKQFIANGNKMPEGLMEEVKKNMQLVEKKSGKVFGGEENPLLVSVRSGAAMSMPGMMDTILNLGLNDKTVVALAKLTNNERFAYDSYRRFVSLFGKIALNVDDEVYDKTLENKKVEKGVKLDTELDANDMKELAQVFIKKTEEFTKQPFPVDPYAQLEFAICAVFRSWMGKRAVDYRREFKITPEQADGTAVSVVSMVYGNMGNDSATGVCFTRDPGTGENMFFGEYLKNAQGEDVVAGIRTPQIISKMAEDADLPGCYEQLLDIRKKLEGYFHEVQDFEFTIERKKLYMLQTRNGKMNATATVRTGVDMVEEGLITKEQAIMRIAPQSVDQLLHKNMPANYAEAPLVKGLPASPGAATGAVVFDADDAVEQAKGKKVLLLREETKPEDIHGFFVAEGILTCRGGKTSHAAVVARGMGKPCVSGAEGIKVDVAKKIAKIGSLEVHEGDILTIDGSTGCVYKGEVPLEEPQVGSGYFGTILKWANEIKKIGVFANADLPSAAKKALEFGAEGIGLCRTERMFNAVERLPIVVKMILSNTLEERKKYLNELMPLQKQDFIGLLKTMNGLPVTVRLLDPPLHEFLPTLEELMREIFEMKLSGKTEGLAEKEVVLKKVKELMEVNPMIGHRGIRLGTTNPEIYEMQIRAFLEATAEVIKEGIKTHAEIMIPNVTEVNELINLRKNVLEPVHEEVEKKYGIKVPFMYGTMVECVRAALTADKIATEASFFSFGTNDLTQGTFSYSREDSENKFIPKYVELKILPANPFEILDRPGVGEVMRIAVTKGRQTRPELLVGICGEHGGEPSSIEWCHMIGLNYVSCSSYRIPVARIAAAQAQIRHPREN</sequence>
<dbReference type="EC" id="2.7.9.1" evidence="4"/>
<dbReference type="EMBL" id="X74596">
    <property type="protein sequence ID" value="CAA52673.1"/>
    <property type="molecule type" value="Genomic_DNA"/>
</dbReference>
<dbReference type="EMBL" id="U02529">
    <property type="protein sequence ID" value="AAA18944.1"/>
    <property type="molecule type" value="Unassigned_RNA"/>
</dbReference>
<dbReference type="EMBL" id="DS571184">
    <property type="protein sequence ID" value="EAL51884.1"/>
    <property type="molecule type" value="Genomic_DNA"/>
</dbReference>
<dbReference type="EMBL" id="L03389">
    <property type="protein sequence ID" value="AAA19026.1"/>
    <property type="molecule type" value="Unassigned_DNA"/>
</dbReference>
<dbReference type="PIR" id="S36601">
    <property type="entry name" value="S36601"/>
</dbReference>
<dbReference type="RefSeq" id="XP_657332.1">
    <property type="nucleotide sequence ID" value="XM_652240.2"/>
</dbReference>
<dbReference type="SMR" id="P37213"/>
<dbReference type="STRING" id="5759.Q24801"/>
<dbReference type="EnsemblProtists" id="GAT94100">
    <property type="protein sequence ID" value="GAT94100"/>
    <property type="gene ID" value="CL6EHI_009530"/>
</dbReference>
<dbReference type="EnsemblProtists" id="rna_EHI_009530-1">
    <property type="protein sequence ID" value="rna_EHI_009530-1"/>
    <property type="gene ID" value="EHI_009530"/>
</dbReference>
<dbReference type="GeneID" id="3411634"/>
<dbReference type="KEGG" id="ehi:EHI_009530"/>
<dbReference type="VEuPathDB" id="AmoebaDB:EHI5A_102340"/>
<dbReference type="VEuPathDB" id="AmoebaDB:EHI7A_182430"/>
<dbReference type="VEuPathDB" id="AmoebaDB:EHI8A_212360"/>
<dbReference type="VEuPathDB" id="AmoebaDB:EHI_009530"/>
<dbReference type="VEuPathDB" id="AmoebaDB:KM1_287560"/>
<dbReference type="eggNOG" id="ENOG502QREJ">
    <property type="taxonomic scope" value="Eukaryota"/>
</dbReference>
<dbReference type="HOGENOM" id="CLU_015345_0_2_1"/>
<dbReference type="OMA" id="HFFHEVG"/>
<dbReference type="OrthoDB" id="10256745at2759"/>
<dbReference type="BRENDA" id="2.7.9.1">
    <property type="organism ID" value="2080"/>
</dbReference>
<dbReference type="SABIO-RK" id="P37213"/>
<dbReference type="Proteomes" id="UP000001926">
    <property type="component" value="Partially assembled WGS sequence"/>
</dbReference>
<dbReference type="GO" id="GO:0005524">
    <property type="term" value="F:ATP binding"/>
    <property type="evidence" value="ECO:0007669"/>
    <property type="project" value="UniProtKB-KW"/>
</dbReference>
<dbReference type="GO" id="GO:0016301">
    <property type="term" value="F:kinase activity"/>
    <property type="evidence" value="ECO:0007669"/>
    <property type="project" value="UniProtKB-KW"/>
</dbReference>
<dbReference type="GO" id="GO:0046872">
    <property type="term" value="F:metal ion binding"/>
    <property type="evidence" value="ECO:0007669"/>
    <property type="project" value="UniProtKB-KW"/>
</dbReference>
<dbReference type="GO" id="GO:0050242">
    <property type="term" value="F:pyruvate, phosphate dikinase activity"/>
    <property type="evidence" value="ECO:0007669"/>
    <property type="project" value="UniProtKB-EC"/>
</dbReference>
<dbReference type="Gene3D" id="1.20.80.30">
    <property type="match status" value="1"/>
</dbReference>
<dbReference type="Gene3D" id="3.30.1490.20">
    <property type="entry name" value="ATP-grasp fold, A domain"/>
    <property type="match status" value="1"/>
</dbReference>
<dbReference type="Gene3D" id="3.30.470.20">
    <property type="entry name" value="ATP-grasp fold, B domain"/>
    <property type="match status" value="1"/>
</dbReference>
<dbReference type="Gene3D" id="3.20.20.60">
    <property type="entry name" value="Phosphoenolpyruvate-binding domains"/>
    <property type="match status" value="1"/>
</dbReference>
<dbReference type="Gene3D" id="3.50.30.10">
    <property type="entry name" value="Phosphohistidine domain"/>
    <property type="match status" value="1"/>
</dbReference>
<dbReference type="Gene3D" id="1.10.189.10">
    <property type="entry name" value="Pyruvate Phosphate Dikinase, domain 2"/>
    <property type="match status" value="1"/>
</dbReference>
<dbReference type="InterPro" id="IPR013815">
    <property type="entry name" value="ATP_grasp_subdomain_1"/>
</dbReference>
<dbReference type="InterPro" id="IPR008279">
    <property type="entry name" value="PEP-util_enz_mobile_dom"/>
</dbReference>
<dbReference type="InterPro" id="IPR018274">
    <property type="entry name" value="PEP_util_AS"/>
</dbReference>
<dbReference type="InterPro" id="IPR000121">
    <property type="entry name" value="PEP_util_C"/>
</dbReference>
<dbReference type="InterPro" id="IPR023151">
    <property type="entry name" value="PEP_util_CS"/>
</dbReference>
<dbReference type="InterPro" id="IPR036637">
    <property type="entry name" value="Phosphohistidine_dom_sf"/>
</dbReference>
<dbReference type="InterPro" id="IPR002192">
    <property type="entry name" value="PPDK_AMP/ATP-bd"/>
</dbReference>
<dbReference type="InterPro" id="IPR010121">
    <property type="entry name" value="Pyruvate_phosphate_dikinase"/>
</dbReference>
<dbReference type="InterPro" id="IPR015813">
    <property type="entry name" value="Pyrv/PenolPyrv_kinase-like_dom"/>
</dbReference>
<dbReference type="InterPro" id="IPR040442">
    <property type="entry name" value="Pyrv_kinase-like_dom_sf"/>
</dbReference>
<dbReference type="NCBIfam" id="NF004531">
    <property type="entry name" value="PRK05878.1"/>
    <property type="match status" value="1"/>
</dbReference>
<dbReference type="NCBIfam" id="TIGR01828">
    <property type="entry name" value="pyru_phos_dikin"/>
    <property type="match status" value="1"/>
</dbReference>
<dbReference type="PANTHER" id="PTHR22931">
    <property type="entry name" value="PHOSPHOENOLPYRUVATE DIKINASE-RELATED"/>
    <property type="match status" value="1"/>
</dbReference>
<dbReference type="PANTHER" id="PTHR22931:SF9">
    <property type="entry name" value="PYRUVATE, PHOSPHATE DIKINASE 1, CHLOROPLASTIC"/>
    <property type="match status" value="1"/>
</dbReference>
<dbReference type="Pfam" id="PF00391">
    <property type="entry name" value="PEP-utilizers"/>
    <property type="match status" value="1"/>
</dbReference>
<dbReference type="Pfam" id="PF02896">
    <property type="entry name" value="PEP-utilizers_C"/>
    <property type="match status" value="1"/>
</dbReference>
<dbReference type="Pfam" id="PF01326">
    <property type="entry name" value="PPDK_N"/>
    <property type="match status" value="2"/>
</dbReference>
<dbReference type="PIRSF" id="PIRSF000853">
    <property type="entry name" value="PPDK"/>
    <property type="match status" value="1"/>
</dbReference>
<dbReference type="SUPFAM" id="SSF56059">
    <property type="entry name" value="Glutathione synthetase ATP-binding domain-like"/>
    <property type="match status" value="1"/>
</dbReference>
<dbReference type="SUPFAM" id="SSF51621">
    <property type="entry name" value="Phosphoenolpyruvate/pyruvate domain"/>
    <property type="match status" value="1"/>
</dbReference>
<dbReference type="SUPFAM" id="SSF52009">
    <property type="entry name" value="Phosphohistidine domain"/>
    <property type="match status" value="1"/>
</dbReference>
<dbReference type="PROSITE" id="PS00742">
    <property type="entry name" value="PEP_ENZYMES_2"/>
    <property type="match status" value="1"/>
</dbReference>
<dbReference type="PROSITE" id="PS00370">
    <property type="entry name" value="PEP_ENZYMES_PHOS_SITE"/>
    <property type="match status" value="1"/>
</dbReference>
<gene>
    <name evidence="6" type="primary">PPDK</name>
    <name evidence="13" type="ORF">EHI_009530</name>
</gene>
<keyword id="KW-0067">ATP-binding</keyword>
<keyword id="KW-0418">Kinase</keyword>
<keyword id="KW-0460">Magnesium</keyword>
<keyword id="KW-0479">Metal-binding</keyword>
<keyword id="KW-0547">Nucleotide-binding</keyword>
<keyword id="KW-0597">Phosphoprotein</keyword>
<keyword id="KW-1185">Reference proteome</keyword>
<keyword id="KW-0808">Transferase</keyword>
<name>PPDK_ENTH1</name>
<protein>
    <recommendedName>
        <fullName evidence="7">Pyruvate, phosphate dikinase</fullName>
        <shortName evidence="6">EhPPDK</shortName>
        <ecNumber evidence="4">2.7.9.1</ecNumber>
    </recommendedName>
    <alternativeName>
        <fullName evidence="5">Pyruvate, orthophosphate dikinase</fullName>
    </alternativeName>
</protein>